<feature type="chain" id="PRO_1000065728" description="N-succinylarginine dihydrolase">
    <location>
        <begin position="1"/>
        <end position="448"/>
    </location>
</feature>
<feature type="active site" evidence="1">
    <location>
        <position position="174"/>
    </location>
</feature>
<feature type="active site" evidence="1">
    <location>
        <position position="252"/>
    </location>
</feature>
<feature type="active site" description="Nucleophile" evidence="1">
    <location>
        <position position="372"/>
    </location>
</feature>
<feature type="binding site" evidence="1">
    <location>
        <begin position="19"/>
        <end position="28"/>
    </location>
    <ligand>
        <name>substrate</name>
    </ligand>
</feature>
<feature type="binding site" evidence="1">
    <location>
        <position position="110"/>
    </location>
    <ligand>
        <name>substrate</name>
    </ligand>
</feature>
<feature type="binding site" evidence="1">
    <location>
        <begin position="137"/>
        <end position="138"/>
    </location>
    <ligand>
        <name>substrate</name>
    </ligand>
</feature>
<feature type="binding site" evidence="1">
    <location>
        <position position="216"/>
    </location>
    <ligand>
        <name>substrate</name>
    </ligand>
</feature>
<feature type="binding site" evidence="1">
    <location>
        <position position="254"/>
    </location>
    <ligand>
        <name>substrate</name>
    </ligand>
</feature>
<feature type="binding site" evidence="1">
    <location>
        <position position="366"/>
    </location>
    <ligand>
        <name>substrate</name>
    </ligand>
</feature>
<organism>
    <name type="scientific">Legionella pneumophila (strain Corby)</name>
    <dbReference type="NCBI Taxonomy" id="400673"/>
    <lineage>
        <taxon>Bacteria</taxon>
        <taxon>Pseudomonadati</taxon>
        <taxon>Pseudomonadota</taxon>
        <taxon>Gammaproteobacteria</taxon>
        <taxon>Legionellales</taxon>
        <taxon>Legionellaceae</taxon>
        <taxon>Legionella</taxon>
    </lineage>
</organism>
<proteinExistence type="inferred from homology"/>
<accession>A5ICK4</accession>
<comment type="function">
    <text evidence="1">Catalyzes the hydrolysis of N(2)-succinylarginine into N(2)-succinylornithine, ammonia and CO(2).</text>
</comment>
<comment type="catalytic activity">
    <reaction evidence="1">
        <text>N(2)-succinyl-L-arginine + 2 H2O + 2 H(+) = N(2)-succinyl-L-ornithine + 2 NH4(+) + CO2</text>
        <dbReference type="Rhea" id="RHEA:19533"/>
        <dbReference type="ChEBI" id="CHEBI:15377"/>
        <dbReference type="ChEBI" id="CHEBI:15378"/>
        <dbReference type="ChEBI" id="CHEBI:16526"/>
        <dbReference type="ChEBI" id="CHEBI:28938"/>
        <dbReference type="ChEBI" id="CHEBI:58241"/>
        <dbReference type="ChEBI" id="CHEBI:58514"/>
        <dbReference type="EC" id="3.5.3.23"/>
    </reaction>
</comment>
<comment type="pathway">
    <text evidence="1">Amino-acid degradation; L-arginine degradation via AST pathway; L-glutamate and succinate from L-arginine: step 2/5.</text>
</comment>
<comment type="subunit">
    <text evidence="1">Homodimer.</text>
</comment>
<comment type="similarity">
    <text evidence="1">Belongs to the succinylarginine dihydrolase family.</text>
</comment>
<keyword id="KW-0056">Arginine metabolism</keyword>
<keyword id="KW-0378">Hydrolase</keyword>
<evidence type="ECO:0000255" key="1">
    <source>
        <dbReference type="HAMAP-Rule" id="MF_01172"/>
    </source>
</evidence>
<gene>
    <name evidence="1" type="primary">astB</name>
    <name type="ordered locus">LPC_1137</name>
</gene>
<name>ASTB_LEGPC</name>
<reference key="1">
    <citation type="submission" date="2006-11" db="EMBL/GenBank/DDBJ databases">
        <title>Identification and characterization of a new conjugation/ type IVA secretion system (trb/tra) of L. pneumophila Corby localized on a mobile genomic island.</title>
        <authorList>
            <person name="Gloeckner G."/>
            <person name="Albert-Weissenberger C."/>
            <person name="Weinmann E."/>
            <person name="Jacobi S."/>
            <person name="Schunder E."/>
            <person name="Steinert M."/>
            <person name="Buchrieser C."/>
            <person name="Hacker J."/>
            <person name="Heuner K."/>
        </authorList>
    </citation>
    <scope>NUCLEOTIDE SEQUENCE [LARGE SCALE GENOMIC DNA]</scope>
    <source>
        <strain>Corby</strain>
    </source>
</reference>
<dbReference type="EC" id="3.5.3.23" evidence="1"/>
<dbReference type="EMBL" id="CP000675">
    <property type="protein sequence ID" value="ABQ55104.1"/>
    <property type="molecule type" value="Genomic_DNA"/>
</dbReference>
<dbReference type="RefSeq" id="WP_010947435.1">
    <property type="nucleotide sequence ID" value="NZ_JAPMSS010000002.1"/>
</dbReference>
<dbReference type="SMR" id="A5ICK4"/>
<dbReference type="GeneID" id="57035697"/>
<dbReference type="KEGG" id="lpc:LPC_1137"/>
<dbReference type="HOGENOM" id="CLU_053835_0_0_6"/>
<dbReference type="UniPathway" id="UPA00185">
    <property type="reaction ID" value="UER00280"/>
</dbReference>
<dbReference type="GO" id="GO:0009015">
    <property type="term" value="F:N-succinylarginine dihydrolase activity"/>
    <property type="evidence" value="ECO:0007669"/>
    <property type="project" value="UniProtKB-UniRule"/>
</dbReference>
<dbReference type="GO" id="GO:0019544">
    <property type="term" value="P:arginine catabolic process to glutamate"/>
    <property type="evidence" value="ECO:0007669"/>
    <property type="project" value="UniProtKB-UniRule"/>
</dbReference>
<dbReference type="GO" id="GO:0019545">
    <property type="term" value="P:arginine catabolic process to succinate"/>
    <property type="evidence" value="ECO:0007669"/>
    <property type="project" value="UniProtKB-UniRule"/>
</dbReference>
<dbReference type="Gene3D" id="3.75.10.20">
    <property type="entry name" value="Succinylarginine dihydrolase"/>
    <property type="match status" value="1"/>
</dbReference>
<dbReference type="HAMAP" id="MF_01172">
    <property type="entry name" value="AstB"/>
    <property type="match status" value="1"/>
</dbReference>
<dbReference type="InterPro" id="IPR037031">
    <property type="entry name" value="AstB_sf"/>
</dbReference>
<dbReference type="InterPro" id="IPR007079">
    <property type="entry name" value="SuccinylArg_d-Hdrlase_AstB"/>
</dbReference>
<dbReference type="NCBIfam" id="TIGR03241">
    <property type="entry name" value="arg_catab_astB"/>
    <property type="match status" value="1"/>
</dbReference>
<dbReference type="NCBIfam" id="NF009789">
    <property type="entry name" value="PRK13281.1"/>
    <property type="match status" value="1"/>
</dbReference>
<dbReference type="PANTHER" id="PTHR30420">
    <property type="entry name" value="N-SUCCINYLARGININE DIHYDROLASE"/>
    <property type="match status" value="1"/>
</dbReference>
<dbReference type="PANTHER" id="PTHR30420:SF2">
    <property type="entry name" value="N-SUCCINYLARGININE DIHYDROLASE"/>
    <property type="match status" value="1"/>
</dbReference>
<dbReference type="Pfam" id="PF04996">
    <property type="entry name" value="AstB"/>
    <property type="match status" value="1"/>
</dbReference>
<dbReference type="SUPFAM" id="SSF55909">
    <property type="entry name" value="Pentein"/>
    <property type="match status" value="1"/>
</dbReference>
<sequence length="448" mass="50134">MNVYELNMDGLVGQTHHYAGLSSGNIASTNNALSISNPQAAARQGLEKMRQLYNMGLKQGLLPPHQRPNLNLLYQLGFKGTPSEQINKAYKTAPELLSACYSASSMWTANAATVSASVDTEDNKVHFTAANLISNLHRHQEADFSKKLLEFIFSNSDYFNHHPLLPKSMGTSDEGAANHNRLCQSHAHSGINLFVYGKKVLGNHQFEQSPIKYPARQTKEASEAIARNHLLNPERVIFACQNPLAIDQGVFHNDVISVANEHVFLVHEEAFYNQAYVLDQLREKADFPLVIIQISKEQISVSEAVDTYLFNSQLITLPDQKNMILIAPAECQANLKVKTCIDGLVADPQNPINSVYYLDLKQSMRNGGGPACLRLRVPLNDYELKAMHQGILIDNDLLDILDKWVLKYYRTELKIPDLADPQLLYECLDALDELTQILKLGSIYPFQS</sequence>
<protein>
    <recommendedName>
        <fullName evidence="1">N-succinylarginine dihydrolase</fullName>
        <ecNumber evidence="1">3.5.3.23</ecNumber>
    </recommendedName>
</protein>